<proteinExistence type="inferred from homology"/>
<name>LIPA_BUCA5</name>
<feature type="chain" id="PRO_1000124623" description="Lipoyl synthase">
    <location>
        <begin position="1"/>
        <end position="323"/>
    </location>
</feature>
<feature type="domain" description="Radical SAM core" evidence="2">
    <location>
        <begin position="77"/>
        <end position="293"/>
    </location>
</feature>
<feature type="binding site" evidence="1">
    <location>
        <position position="65"/>
    </location>
    <ligand>
        <name>[4Fe-4S] cluster</name>
        <dbReference type="ChEBI" id="CHEBI:49883"/>
        <label>1</label>
    </ligand>
</feature>
<feature type="binding site" evidence="1">
    <location>
        <position position="70"/>
    </location>
    <ligand>
        <name>[4Fe-4S] cluster</name>
        <dbReference type="ChEBI" id="CHEBI:49883"/>
        <label>1</label>
    </ligand>
</feature>
<feature type="binding site" evidence="1">
    <location>
        <position position="76"/>
    </location>
    <ligand>
        <name>[4Fe-4S] cluster</name>
        <dbReference type="ChEBI" id="CHEBI:49883"/>
        <label>1</label>
    </ligand>
</feature>
<feature type="binding site" evidence="1">
    <location>
        <position position="91"/>
    </location>
    <ligand>
        <name>[4Fe-4S] cluster</name>
        <dbReference type="ChEBI" id="CHEBI:49883"/>
        <label>2</label>
        <note>4Fe-4S-S-AdoMet</note>
    </ligand>
</feature>
<feature type="binding site" evidence="1">
    <location>
        <position position="95"/>
    </location>
    <ligand>
        <name>[4Fe-4S] cluster</name>
        <dbReference type="ChEBI" id="CHEBI:49883"/>
        <label>2</label>
        <note>4Fe-4S-S-AdoMet</note>
    </ligand>
</feature>
<feature type="binding site" evidence="1">
    <location>
        <position position="98"/>
    </location>
    <ligand>
        <name>[4Fe-4S] cluster</name>
        <dbReference type="ChEBI" id="CHEBI:49883"/>
        <label>2</label>
        <note>4Fe-4S-S-AdoMet</note>
    </ligand>
</feature>
<feature type="binding site" evidence="1">
    <location>
        <position position="304"/>
    </location>
    <ligand>
        <name>[4Fe-4S] cluster</name>
        <dbReference type="ChEBI" id="CHEBI:49883"/>
        <label>1</label>
    </ligand>
</feature>
<comment type="function">
    <text evidence="1">Catalyzes the radical-mediated insertion of two sulfur atoms into the C-6 and C-8 positions of the octanoyl moiety bound to the lipoyl domains of lipoate-dependent enzymes, thereby converting the octanoylated domains into lipoylated derivatives.</text>
</comment>
<comment type="catalytic activity">
    <reaction evidence="1">
        <text>[[Fe-S] cluster scaffold protein carrying a second [4Fe-4S](2+) cluster] + N(6)-octanoyl-L-lysyl-[protein] + 2 oxidized [2Fe-2S]-[ferredoxin] + 2 S-adenosyl-L-methionine + 4 H(+) = [[Fe-S] cluster scaffold protein] + N(6)-[(R)-dihydrolipoyl]-L-lysyl-[protein] + 4 Fe(3+) + 2 hydrogen sulfide + 2 5'-deoxyadenosine + 2 L-methionine + 2 reduced [2Fe-2S]-[ferredoxin]</text>
        <dbReference type="Rhea" id="RHEA:16585"/>
        <dbReference type="Rhea" id="RHEA-COMP:9928"/>
        <dbReference type="Rhea" id="RHEA-COMP:10000"/>
        <dbReference type="Rhea" id="RHEA-COMP:10001"/>
        <dbReference type="Rhea" id="RHEA-COMP:10475"/>
        <dbReference type="Rhea" id="RHEA-COMP:14568"/>
        <dbReference type="Rhea" id="RHEA-COMP:14569"/>
        <dbReference type="ChEBI" id="CHEBI:15378"/>
        <dbReference type="ChEBI" id="CHEBI:17319"/>
        <dbReference type="ChEBI" id="CHEBI:29034"/>
        <dbReference type="ChEBI" id="CHEBI:29919"/>
        <dbReference type="ChEBI" id="CHEBI:33722"/>
        <dbReference type="ChEBI" id="CHEBI:33737"/>
        <dbReference type="ChEBI" id="CHEBI:33738"/>
        <dbReference type="ChEBI" id="CHEBI:57844"/>
        <dbReference type="ChEBI" id="CHEBI:59789"/>
        <dbReference type="ChEBI" id="CHEBI:78809"/>
        <dbReference type="ChEBI" id="CHEBI:83100"/>
        <dbReference type="EC" id="2.8.1.8"/>
    </reaction>
</comment>
<comment type="cofactor">
    <cofactor evidence="1">
        <name>[4Fe-4S] cluster</name>
        <dbReference type="ChEBI" id="CHEBI:49883"/>
    </cofactor>
    <text evidence="1">Binds 2 [4Fe-4S] clusters per subunit. One cluster is coordinated with 3 cysteines and an exchangeable S-adenosyl-L-methionine.</text>
</comment>
<comment type="pathway">
    <text evidence="1">Protein modification; protein lipoylation via endogenous pathway; protein N(6)-(lipoyl)lysine from octanoyl-[acyl-carrier-protein]: step 2/2.</text>
</comment>
<comment type="subcellular location">
    <subcellularLocation>
        <location evidence="1">Cytoplasm</location>
    </subcellularLocation>
</comment>
<comment type="similarity">
    <text evidence="1">Belongs to the radical SAM superfamily. Lipoyl synthase family.</text>
</comment>
<accession>B8D962</accession>
<sequence>MKKNKDVLLKNKILKKLNIINIKNLDNIKEKLKKPDWIKIKIPVNTSRIYQIKNALRKNNLYSVCEEAHCPNLSECFNNGTATFMILGSICTRNCPFCAVFHGRPNPVNVEEPQKLSDTIFDMGINYVVITSVVRDDLYDGGAEHFVNCIKAIKNKNQVKIEILVPDFRGRIELILNIFNNALPDIFNHNIENVPRLYKKIRPGANYQRSLLLLESFKKKYCSVLTKSGLMLGLGEKDVEIIQVMKDLYSSGVTLLTVGQYLQPSIHHLPVKRYIPLSEFENIKKEALSIGFTNAFCGPFVRSSYHASFQSHLPIKNNDINNI</sequence>
<dbReference type="EC" id="2.8.1.8" evidence="1"/>
<dbReference type="EMBL" id="CP001161">
    <property type="protein sequence ID" value="ACL30633.1"/>
    <property type="molecule type" value="Genomic_DNA"/>
</dbReference>
<dbReference type="RefSeq" id="WP_009874223.1">
    <property type="nucleotide sequence ID" value="NC_011833.1"/>
</dbReference>
<dbReference type="SMR" id="B8D962"/>
<dbReference type="KEGG" id="bap:BUAP5A_264"/>
<dbReference type="HOGENOM" id="CLU_033144_2_1_6"/>
<dbReference type="OrthoDB" id="9787898at2"/>
<dbReference type="UniPathway" id="UPA00538">
    <property type="reaction ID" value="UER00593"/>
</dbReference>
<dbReference type="Proteomes" id="UP000006904">
    <property type="component" value="Chromosome"/>
</dbReference>
<dbReference type="GO" id="GO:0005737">
    <property type="term" value="C:cytoplasm"/>
    <property type="evidence" value="ECO:0007669"/>
    <property type="project" value="UniProtKB-SubCell"/>
</dbReference>
<dbReference type="GO" id="GO:0051539">
    <property type="term" value="F:4 iron, 4 sulfur cluster binding"/>
    <property type="evidence" value="ECO:0007669"/>
    <property type="project" value="UniProtKB-UniRule"/>
</dbReference>
<dbReference type="GO" id="GO:0016992">
    <property type="term" value="F:lipoate synthase activity"/>
    <property type="evidence" value="ECO:0007669"/>
    <property type="project" value="UniProtKB-UniRule"/>
</dbReference>
<dbReference type="GO" id="GO:0046872">
    <property type="term" value="F:metal ion binding"/>
    <property type="evidence" value="ECO:0007669"/>
    <property type="project" value="UniProtKB-KW"/>
</dbReference>
<dbReference type="FunFam" id="3.20.20.70:FF:000040">
    <property type="entry name" value="Lipoyl synthase"/>
    <property type="match status" value="1"/>
</dbReference>
<dbReference type="Gene3D" id="3.20.20.70">
    <property type="entry name" value="Aldolase class I"/>
    <property type="match status" value="1"/>
</dbReference>
<dbReference type="HAMAP" id="MF_00206">
    <property type="entry name" value="Lipoyl_synth"/>
    <property type="match status" value="1"/>
</dbReference>
<dbReference type="InterPro" id="IPR013785">
    <property type="entry name" value="Aldolase_TIM"/>
</dbReference>
<dbReference type="InterPro" id="IPR006638">
    <property type="entry name" value="Elp3/MiaA/NifB-like_rSAM"/>
</dbReference>
<dbReference type="InterPro" id="IPR031691">
    <property type="entry name" value="LIAS_N"/>
</dbReference>
<dbReference type="InterPro" id="IPR003698">
    <property type="entry name" value="Lipoyl_synth"/>
</dbReference>
<dbReference type="InterPro" id="IPR007197">
    <property type="entry name" value="rSAM"/>
</dbReference>
<dbReference type="NCBIfam" id="TIGR00510">
    <property type="entry name" value="lipA"/>
    <property type="match status" value="1"/>
</dbReference>
<dbReference type="NCBIfam" id="NF004019">
    <property type="entry name" value="PRK05481.1"/>
    <property type="match status" value="1"/>
</dbReference>
<dbReference type="NCBIfam" id="NF009544">
    <property type="entry name" value="PRK12928.1"/>
    <property type="match status" value="1"/>
</dbReference>
<dbReference type="PANTHER" id="PTHR10949">
    <property type="entry name" value="LIPOYL SYNTHASE"/>
    <property type="match status" value="1"/>
</dbReference>
<dbReference type="PANTHER" id="PTHR10949:SF0">
    <property type="entry name" value="LIPOYL SYNTHASE, MITOCHONDRIAL"/>
    <property type="match status" value="1"/>
</dbReference>
<dbReference type="Pfam" id="PF16881">
    <property type="entry name" value="LIAS_N"/>
    <property type="match status" value="1"/>
</dbReference>
<dbReference type="Pfam" id="PF04055">
    <property type="entry name" value="Radical_SAM"/>
    <property type="match status" value="1"/>
</dbReference>
<dbReference type="PIRSF" id="PIRSF005963">
    <property type="entry name" value="Lipoyl_synth"/>
    <property type="match status" value="1"/>
</dbReference>
<dbReference type="SFLD" id="SFLDF00271">
    <property type="entry name" value="lipoyl_synthase"/>
    <property type="match status" value="1"/>
</dbReference>
<dbReference type="SFLD" id="SFLDS00029">
    <property type="entry name" value="Radical_SAM"/>
    <property type="match status" value="1"/>
</dbReference>
<dbReference type="SMART" id="SM00729">
    <property type="entry name" value="Elp3"/>
    <property type="match status" value="1"/>
</dbReference>
<dbReference type="SUPFAM" id="SSF102114">
    <property type="entry name" value="Radical SAM enzymes"/>
    <property type="match status" value="1"/>
</dbReference>
<dbReference type="PROSITE" id="PS51918">
    <property type="entry name" value="RADICAL_SAM"/>
    <property type="match status" value="1"/>
</dbReference>
<protein>
    <recommendedName>
        <fullName evidence="1">Lipoyl synthase</fullName>
        <ecNumber evidence="1">2.8.1.8</ecNumber>
    </recommendedName>
    <alternativeName>
        <fullName evidence="1">Lip-syn</fullName>
        <shortName evidence="1">LS</shortName>
    </alternativeName>
    <alternativeName>
        <fullName evidence="1">Lipoate synthase</fullName>
    </alternativeName>
    <alternativeName>
        <fullName evidence="1">Lipoic acid synthase</fullName>
    </alternativeName>
    <alternativeName>
        <fullName evidence="1">Sulfur insertion protein LipA</fullName>
    </alternativeName>
</protein>
<organism>
    <name type="scientific">Buchnera aphidicola subsp. Acyrthosiphon pisum (strain 5A)</name>
    <dbReference type="NCBI Taxonomy" id="563178"/>
    <lineage>
        <taxon>Bacteria</taxon>
        <taxon>Pseudomonadati</taxon>
        <taxon>Pseudomonadota</taxon>
        <taxon>Gammaproteobacteria</taxon>
        <taxon>Enterobacterales</taxon>
        <taxon>Erwiniaceae</taxon>
        <taxon>Buchnera</taxon>
    </lineage>
</organism>
<keyword id="KW-0004">4Fe-4S</keyword>
<keyword id="KW-0963">Cytoplasm</keyword>
<keyword id="KW-0408">Iron</keyword>
<keyword id="KW-0411">Iron-sulfur</keyword>
<keyword id="KW-0479">Metal-binding</keyword>
<keyword id="KW-0949">S-adenosyl-L-methionine</keyword>
<keyword id="KW-0808">Transferase</keyword>
<evidence type="ECO:0000255" key="1">
    <source>
        <dbReference type="HAMAP-Rule" id="MF_00206"/>
    </source>
</evidence>
<evidence type="ECO:0000255" key="2">
    <source>
        <dbReference type="PROSITE-ProRule" id="PRU01266"/>
    </source>
</evidence>
<reference key="1">
    <citation type="journal article" date="2009" name="Science">
        <title>The dynamics and time scale of ongoing genomic erosion in symbiotic bacteria.</title>
        <authorList>
            <person name="Moran N.A."/>
            <person name="McLaughlin H.J."/>
            <person name="Sorek R."/>
        </authorList>
    </citation>
    <scope>NUCLEOTIDE SEQUENCE [LARGE SCALE GENOMIC DNA]</scope>
    <source>
        <strain>5A</strain>
    </source>
</reference>
<gene>
    <name evidence="1" type="primary">lipA</name>
    <name type="ordered locus">BUAP5A_264</name>
</gene>